<reference key="1">
    <citation type="journal article" date="2006" name="Proc. Natl. Acad. Sci. U.S.A.">
        <title>Comparative genomics of the lactic acid bacteria.</title>
        <authorList>
            <person name="Makarova K.S."/>
            <person name="Slesarev A."/>
            <person name="Wolf Y.I."/>
            <person name="Sorokin A."/>
            <person name="Mirkin B."/>
            <person name="Koonin E.V."/>
            <person name="Pavlov A."/>
            <person name="Pavlova N."/>
            <person name="Karamychev V."/>
            <person name="Polouchine N."/>
            <person name="Shakhova V."/>
            <person name="Grigoriev I."/>
            <person name="Lou Y."/>
            <person name="Rohksar D."/>
            <person name="Lucas S."/>
            <person name="Huang K."/>
            <person name="Goodstein D.M."/>
            <person name="Hawkins T."/>
            <person name="Plengvidhya V."/>
            <person name="Welker D."/>
            <person name="Hughes J."/>
            <person name="Goh Y."/>
            <person name="Benson A."/>
            <person name="Baldwin K."/>
            <person name="Lee J.-H."/>
            <person name="Diaz-Muniz I."/>
            <person name="Dosti B."/>
            <person name="Smeianov V."/>
            <person name="Wechter W."/>
            <person name="Barabote R."/>
            <person name="Lorca G."/>
            <person name="Altermann E."/>
            <person name="Barrangou R."/>
            <person name="Ganesan B."/>
            <person name="Xie Y."/>
            <person name="Rawsthorne H."/>
            <person name="Tamir D."/>
            <person name="Parker C."/>
            <person name="Breidt F."/>
            <person name="Broadbent J.R."/>
            <person name="Hutkins R."/>
            <person name="O'Sullivan D."/>
            <person name="Steele J."/>
            <person name="Unlu G."/>
            <person name="Saier M.H. Jr."/>
            <person name="Klaenhammer T."/>
            <person name="Richardson P."/>
            <person name="Kozyavkin S."/>
            <person name="Weimer B.C."/>
            <person name="Mills D.A."/>
        </authorList>
    </citation>
    <scope>NUCLEOTIDE SEQUENCE [LARGE SCALE GENOMIC DNA]</scope>
    <source>
        <strain>ATCC 334 / BCRC 17002 / CCUG 31169 / CIP 107868 / KCTC 3260 / NRRL B-441</strain>
    </source>
</reference>
<name>RS20_LACP3</name>
<comment type="function">
    <text evidence="1">Binds directly to 16S ribosomal RNA.</text>
</comment>
<comment type="similarity">
    <text evidence="1">Belongs to the bacterial ribosomal protein bS20 family.</text>
</comment>
<keyword id="KW-1185">Reference proteome</keyword>
<keyword id="KW-0687">Ribonucleoprotein</keyword>
<keyword id="KW-0689">Ribosomal protein</keyword>
<keyword id="KW-0694">RNA-binding</keyword>
<keyword id="KW-0699">rRNA-binding</keyword>
<accession>Q039L4</accession>
<protein>
    <recommendedName>
        <fullName evidence="1">Small ribosomal subunit protein bS20</fullName>
    </recommendedName>
    <alternativeName>
        <fullName evidence="2">30S ribosomal protein S20</fullName>
    </alternativeName>
</protein>
<proteinExistence type="inferred from homology"/>
<dbReference type="EMBL" id="CP000423">
    <property type="protein sequence ID" value="ABJ70108.1"/>
    <property type="molecule type" value="Genomic_DNA"/>
</dbReference>
<dbReference type="RefSeq" id="WP_003565265.1">
    <property type="nucleotide sequence ID" value="NC_008526.1"/>
</dbReference>
<dbReference type="RefSeq" id="YP_806550.1">
    <property type="nucleotide sequence ID" value="NC_008526.1"/>
</dbReference>
<dbReference type="SMR" id="Q039L4"/>
<dbReference type="STRING" id="321967.LSEI_1327"/>
<dbReference type="PaxDb" id="321967-LSEI_1327"/>
<dbReference type="GeneID" id="57089999"/>
<dbReference type="KEGG" id="lca:LSEI_1327"/>
<dbReference type="PATRIC" id="fig|321967.11.peg.1306"/>
<dbReference type="HOGENOM" id="CLU_160655_1_1_9"/>
<dbReference type="Proteomes" id="UP000001651">
    <property type="component" value="Chromosome"/>
</dbReference>
<dbReference type="GO" id="GO:0005829">
    <property type="term" value="C:cytosol"/>
    <property type="evidence" value="ECO:0007669"/>
    <property type="project" value="TreeGrafter"/>
</dbReference>
<dbReference type="GO" id="GO:0015935">
    <property type="term" value="C:small ribosomal subunit"/>
    <property type="evidence" value="ECO:0007669"/>
    <property type="project" value="TreeGrafter"/>
</dbReference>
<dbReference type="GO" id="GO:0070181">
    <property type="term" value="F:small ribosomal subunit rRNA binding"/>
    <property type="evidence" value="ECO:0007669"/>
    <property type="project" value="TreeGrafter"/>
</dbReference>
<dbReference type="GO" id="GO:0003735">
    <property type="term" value="F:structural constituent of ribosome"/>
    <property type="evidence" value="ECO:0007669"/>
    <property type="project" value="InterPro"/>
</dbReference>
<dbReference type="GO" id="GO:0006412">
    <property type="term" value="P:translation"/>
    <property type="evidence" value="ECO:0007669"/>
    <property type="project" value="UniProtKB-UniRule"/>
</dbReference>
<dbReference type="Gene3D" id="1.20.58.110">
    <property type="entry name" value="Ribosomal protein S20"/>
    <property type="match status" value="1"/>
</dbReference>
<dbReference type="HAMAP" id="MF_00500">
    <property type="entry name" value="Ribosomal_bS20"/>
    <property type="match status" value="1"/>
</dbReference>
<dbReference type="InterPro" id="IPR002583">
    <property type="entry name" value="Ribosomal_bS20"/>
</dbReference>
<dbReference type="InterPro" id="IPR036510">
    <property type="entry name" value="Ribosomal_bS20_sf"/>
</dbReference>
<dbReference type="NCBIfam" id="TIGR00029">
    <property type="entry name" value="S20"/>
    <property type="match status" value="1"/>
</dbReference>
<dbReference type="PANTHER" id="PTHR33398">
    <property type="entry name" value="30S RIBOSOMAL PROTEIN S20"/>
    <property type="match status" value="1"/>
</dbReference>
<dbReference type="PANTHER" id="PTHR33398:SF1">
    <property type="entry name" value="SMALL RIBOSOMAL SUBUNIT PROTEIN BS20C"/>
    <property type="match status" value="1"/>
</dbReference>
<dbReference type="Pfam" id="PF01649">
    <property type="entry name" value="Ribosomal_S20p"/>
    <property type="match status" value="1"/>
</dbReference>
<dbReference type="SUPFAM" id="SSF46992">
    <property type="entry name" value="Ribosomal protein S20"/>
    <property type="match status" value="1"/>
</dbReference>
<gene>
    <name evidence="1" type="primary">rpsT</name>
    <name type="ordered locus">LSEI_1327</name>
</gene>
<sequence length="84" mass="9317">MPQIKSAIKRVKTQEAARVRNIAQMNAMRTAVKKFKTATEQNADNSQDLYKAAARAIDMANSKGLIKKNKAGRDKSRLSALLNK</sequence>
<organism>
    <name type="scientific">Lacticaseibacillus paracasei (strain ATCC 334 / BCRC 17002 / CCUG 31169 / CIP 107868 / KCTC 3260 / NRRL B-441)</name>
    <name type="common">Lactobacillus paracasei</name>
    <dbReference type="NCBI Taxonomy" id="321967"/>
    <lineage>
        <taxon>Bacteria</taxon>
        <taxon>Bacillati</taxon>
        <taxon>Bacillota</taxon>
        <taxon>Bacilli</taxon>
        <taxon>Lactobacillales</taxon>
        <taxon>Lactobacillaceae</taxon>
        <taxon>Lacticaseibacillus</taxon>
    </lineage>
</organism>
<evidence type="ECO:0000255" key="1">
    <source>
        <dbReference type="HAMAP-Rule" id="MF_00500"/>
    </source>
</evidence>
<evidence type="ECO:0000305" key="2"/>
<feature type="chain" id="PRO_1000126461" description="Small ribosomal subunit protein bS20">
    <location>
        <begin position="1"/>
        <end position="84"/>
    </location>
</feature>